<reference key="1">
    <citation type="journal article" date="1987" name="Mol. Gen. Genet.">
        <title>Characterisation of the hydroxystreptomycin phosphotransferase gene (sph) of Streptomyces glaucescens: nucleotide sequence and promoter analysis.</title>
        <authorList>
            <person name="Voegtli M."/>
            <person name="Huetter R."/>
        </authorList>
    </citation>
    <scope>NUCLEOTIDE SEQUENCE [GENOMIC DNA]</scope>
    <source>
        <strain>DSM 40716 / ETH 22794 / Tue 49</strain>
    </source>
</reference>
<dbReference type="EC" id="2.7.1.72"/>
<dbReference type="EMBL" id="X05648">
    <property type="protein sequence ID" value="CAA29136.1"/>
    <property type="molecule type" value="Genomic_DNA"/>
</dbReference>
<dbReference type="PIR" id="S07039">
    <property type="entry name" value="KISM6C"/>
</dbReference>
<dbReference type="RefSeq" id="WP_052413554.1">
    <property type="nucleotide sequence ID" value="NG_047460.1"/>
</dbReference>
<dbReference type="SMR" id="P18622"/>
<dbReference type="STRING" id="1907.SGLAU_01165"/>
<dbReference type="CARD" id="ARO:3002658">
    <property type="molecule name" value="APH(6)-Ib"/>
    <property type="mechanism identifier" value="ARO:0001004"/>
    <property type="mechanism name" value="antibiotic inactivation"/>
</dbReference>
<dbReference type="KEGG" id="ag:CAA29136"/>
<dbReference type="eggNOG" id="COG3570">
    <property type="taxonomic scope" value="Bacteria"/>
</dbReference>
<dbReference type="OrthoDB" id="3638028at2"/>
<dbReference type="GO" id="GO:0050300">
    <property type="term" value="F:aminoglycoside 6-kinase activity"/>
    <property type="evidence" value="ECO:0007669"/>
    <property type="project" value="UniProtKB-EC"/>
</dbReference>
<dbReference type="GO" id="GO:0005524">
    <property type="term" value="F:ATP binding"/>
    <property type="evidence" value="ECO:0007669"/>
    <property type="project" value="UniProtKB-KW"/>
</dbReference>
<dbReference type="GO" id="GO:0046677">
    <property type="term" value="P:response to antibiotic"/>
    <property type="evidence" value="ECO:0007669"/>
    <property type="project" value="UniProtKB-KW"/>
</dbReference>
<dbReference type="GO" id="GO:0019748">
    <property type="term" value="P:secondary metabolic process"/>
    <property type="evidence" value="ECO:0007669"/>
    <property type="project" value="InterPro"/>
</dbReference>
<dbReference type="Gene3D" id="1.10.510.10">
    <property type="entry name" value="Transferase(Phosphotransferase) domain 1"/>
    <property type="match status" value="1"/>
</dbReference>
<dbReference type="InterPro" id="IPR011009">
    <property type="entry name" value="Kinase-like_dom_sf"/>
</dbReference>
<dbReference type="InterPro" id="IPR006748">
    <property type="entry name" value="NH2Glyco/OHUrea_AB-resist_kin"/>
</dbReference>
<dbReference type="NCBIfam" id="NF012171">
    <property type="entry name" value="APH_6"/>
    <property type="match status" value="1"/>
</dbReference>
<dbReference type="Pfam" id="PF04655">
    <property type="entry name" value="APH_6_hur"/>
    <property type="match status" value="1"/>
</dbReference>
<dbReference type="SUPFAM" id="SSF56112">
    <property type="entry name" value="Protein kinase-like (PK-like)"/>
    <property type="match status" value="1"/>
</dbReference>
<evidence type="ECO:0000250" key="1"/>
<evidence type="ECO:0000305" key="2"/>
<comment type="function">
    <text>The aminoglycoside phosphotransferases achieve inactivation of their antibiotic substrates by phosphorylation.</text>
</comment>
<comment type="catalytic activity">
    <reaction>
        <text>streptomycin + ATP = streptomycin 6-phosphate + ADP + H(+)</text>
        <dbReference type="Rhea" id="RHEA:22268"/>
        <dbReference type="ChEBI" id="CHEBI:15378"/>
        <dbReference type="ChEBI" id="CHEBI:30616"/>
        <dbReference type="ChEBI" id="CHEBI:57787"/>
        <dbReference type="ChEBI" id="CHEBI:58007"/>
        <dbReference type="ChEBI" id="CHEBI:456216"/>
        <dbReference type="EC" id="2.7.1.72"/>
    </reaction>
</comment>
<comment type="similarity">
    <text evidence="2">Belongs to the aminoglycoside phosphotransferase family.</text>
</comment>
<sequence length="307" mass="33154">MSTSKLVEIPEPLAASYARAFGEEGQAWIAALPALVEELLDRWELTADGASASGEASLVLPVLRTDGTRAVLKLQLPREETSAAITGLRTWNGHGVVRLLDHDPRSSTMLLERLDASRTLASVEDDDAAMGVLAGLLARLVSVPAPRGLRGLGDIAGAMLEEVPRAVAALADPADRRLLNDWASAVAELVGEPGDRMLHWDLHYGNVLAAEREPWLAIDPEPLAGDPGFDLWPALDSRWDDIVAQRDVVRVVRRRFDLLTEVLGLDRARAAGWTYGRLLQNALWDIEDGSAALDPAAVTLAQALRGH</sequence>
<proteinExistence type="inferred from homology"/>
<organism>
    <name type="scientific">Streptomyces glaucescens</name>
    <dbReference type="NCBI Taxonomy" id="1907"/>
    <lineage>
        <taxon>Bacteria</taxon>
        <taxon>Bacillati</taxon>
        <taxon>Actinomycetota</taxon>
        <taxon>Actinomycetes</taxon>
        <taxon>Kitasatosporales</taxon>
        <taxon>Streptomycetaceae</taxon>
        <taxon>Streptomyces</taxon>
    </lineage>
</organism>
<name>STRA_STRGA</name>
<accession>P18622</accession>
<protein>
    <recommendedName>
        <fullName>Streptomycin 6-kinase</fullName>
        <ecNumber>2.7.1.72</ecNumber>
    </recommendedName>
    <alternativeName>
        <fullName>APH(6)</fullName>
    </alternativeName>
    <alternativeName>
        <fullName>Streptidine kinase</fullName>
    </alternativeName>
    <alternativeName>
        <fullName>Streptomycin 6-phosphotransferase</fullName>
    </alternativeName>
</protein>
<feature type="chain" id="PRO_0000204816" description="Streptomycin 6-kinase">
    <location>
        <begin position="1"/>
        <end position="307"/>
    </location>
</feature>
<feature type="active site" description="Proton acceptor" evidence="1">
    <location>
        <position position="201"/>
    </location>
</feature>
<feature type="binding site" evidence="1">
    <location>
        <begin position="133"/>
        <end position="145"/>
    </location>
    <ligand>
        <name>streptomycin</name>
        <dbReference type="ChEBI" id="CHEBI:58007"/>
    </ligand>
</feature>
<keyword id="KW-0046">Antibiotic resistance</keyword>
<keyword id="KW-0067">ATP-binding</keyword>
<keyword id="KW-0418">Kinase</keyword>
<keyword id="KW-0547">Nucleotide-binding</keyword>
<keyword id="KW-0808">Transferase</keyword>
<gene>
    <name type="primary">sph</name>
</gene>